<proteinExistence type="evidence at protein level"/>
<dbReference type="EMBL" id="AK291479">
    <property type="protein sequence ID" value="BAF84168.1"/>
    <property type="molecule type" value="mRNA"/>
</dbReference>
<dbReference type="EMBL" id="AK311771">
    <property type="protein sequence ID" value="BAG34714.1"/>
    <property type="molecule type" value="mRNA"/>
</dbReference>
<dbReference type="EMBL" id="Z70227">
    <property type="status" value="NOT_ANNOTATED_CDS"/>
    <property type="molecule type" value="Genomic_DNA"/>
</dbReference>
<dbReference type="CCDS" id="CCDS59172.1"/>
<dbReference type="CCDS" id="CCDS94644.1"/>
<dbReference type="RefSeq" id="NP_001337140.1">
    <property type="nucleotide sequence ID" value="NM_001350211.2"/>
</dbReference>
<dbReference type="RefSeq" id="NP_001337141.1">
    <property type="nucleotide sequence ID" value="NM_001350212.2"/>
</dbReference>
<dbReference type="RefSeq" id="NP_068832.1">
    <property type="nucleotide sequence ID" value="NM_021992.2"/>
</dbReference>
<dbReference type="RefSeq" id="NP_919305.2">
    <property type="nucleotide sequence ID" value="NM_194324.4"/>
</dbReference>
<dbReference type="SMR" id="P0CG35"/>
<dbReference type="BioGRID" id="116203">
    <property type="interactions" value="1"/>
</dbReference>
<dbReference type="BioGRID" id="130400">
    <property type="interactions" value="1"/>
</dbReference>
<dbReference type="FunCoup" id="P0CG35">
    <property type="interactions" value="4"/>
</dbReference>
<dbReference type="iPTMnet" id="P0CG35"/>
<dbReference type="PhosphoSitePlus" id="P0CG35"/>
<dbReference type="BioMuta" id="TMSB15B"/>
<dbReference type="DMDM" id="300681172"/>
<dbReference type="jPOST" id="P0CG35"/>
<dbReference type="MassIVE" id="P0CG35"/>
<dbReference type="Pumba" id="P0CG35"/>
<dbReference type="Antibodypedia" id="2024">
    <property type="antibodies" value="8 antibodies from 7 providers"/>
</dbReference>
<dbReference type="DNASU" id="286527"/>
<dbReference type="Ensembl" id="ENST00000419165.5">
    <property type="protein sequence ID" value="ENSP00000456121.1"/>
    <property type="gene ID" value="ENSG00000158427.15"/>
</dbReference>
<dbReference type="Ensembl" id="ENST00000436583.5">
    <property type="protein sequence ID" value="ENSP00000455771.1"/>
    <property type="gene ID" value="ENSG00000158427.15"/>
</dbReference>
<dbReference type="Ensembl" id="ENST00000540220.6">
    <property type="protein sequence ID" value="ENSP00000455371.1"/>
    <property type="gene ID" value="ENSG00000158427.15"/>
</dbReference>
<dbReference type="Ensembl" id="ENST00000569577.1">
    <property type="protein sequence ID" value="ENSP00000457057.1"/>
    <property type="gene ID" value="ENSG00000158427.15"/>
</dbReference>
<dbReference type="GeneID" id="11013"/>
<dbReference type="GeneID" id="286527"/>
<dbReference type="KEGG" id="hsa:11013"/>
<dbReference type="KEGG" id="hsa:286527"/>
<dbReference type="MANE-Select" id="ENST00000540220.6">
    <property type="protein sequence ID" value="ENSP00000455371.1"/>
    <property type="RefSeq nucleotide sequence ID" value="NM_194324.4"/>
    <property type="RefSeq protein sequence ID" value="NP_919305.2"/>
</dbReference>
<dbReference type="UCSC" id="uc004eje.4">
    <property type="organism name" value="human"/>
</dbReference>
<dbReference type="AGR" id="HGNC:28612"/>
<dbReference type="AGR" id="HGNC:30744"/>
<dbReference type="AGR" id="HGNC:55173"/>
<dbReference type="CTD" id="11013"/>
<dbReference type="CTD" id="286527"/>
<dbReference type="DisGeNET" id="11013"/>
<dbReference type="DisGeNET" id="286527"/>
<dbReference type="GeneCards" id="TMSB15B"/>
<dbReference type="HGNC" id="HGNC:28612">
    <property type="gene designation" value="TMSB15B"/>
</dbReference>
<dbReference type="HPA" id="ENSG00000158427">
    <property type="expression patterns" value="Low tissue specificity"/>
</dbReference>
<dbReference type="MIM" id="301011">
    <property type="type" value="gene"/>
</dbReference>
<dbReference type="neXtProt" id="NX_P0CG35"/>
<dbReference type="OpenTargets" id="ENSG00000158164"/>
<dbReference type="OpenTargets" id="ENSG00000158427"/>
<dbReference type="OpenTargets" id="ENSG00000269226"/>
<dbReference type="PharmGKB" id="PA164726584"/>
<dbReference type="VEuPathDB" id="HostDB:ENSG00000158427"/>
<dbReference type="HOGENOM" id="CLU_208046_0_0_1"/>
<dbReference type="InParanoid" id="P0CG35"/>
<dbReference type="PAN-GO" id="P0CG35">
    <property type="GO annotations" value="4 GO annotations based on evolutionary models"/>
</dbReference>
<dbReference type="PhylomeDB" id="P0CG35"/>
<dbReference type="PathwayCommons" id="P0CG35"/>
<dbReference type="BioGRID-ORCS" id="11013">
    <property type="hits" value="46 hits in 629 CRISPR screens"/>
</dbReference>
<dbReference type="BioGRID-ORCS" id="286527">
    <property type="hits" value="16 hits in 286 CRISPR screens"/>
</dbReference>
<dbReference type="ChiTaRS" id="TMSB15B">
    <property type="organism name" value="human"/>
</dbReference>
<dbReference type="Pharos" id="P0CG35">
    <property type="development level" value="Tdark"/>
</dbReference>
<dbReference type="PRO" id="PR:P0CG35"/>
<dbReference type="Proteomes" id="UP000005640">
    <property type="component" value="Chromosome X"/>
</dbReference>
<dbReference type="Bgee" id="ENSG00000158427">
    <property type="expression patterns" value="Expressed in ganglionic eminence and 97 other cell types or tissues"/>
</dbReference>
<dbReference type="ExpressionAtlas" id="P0CG35">
    <property type="expression patterns" value="baseline and differential"/>
</dbReference>
<dbReference type="GO" id="GO:0005737">
    <property type="term" value="C:cytoplasm"/>
    <property type="evidence" value="ECO:0000318"/>
    <property type="project" value="GO_Central"/>
</dbReference>
<dbReference type="GO" id="GO:0005856">
    <property type="term" value="C:cytoskeleton"/>
    <property type="evidence" value="ECO:0007669"/>
    <property type="project" value="UniProtKB-SubCell"/>
</dbReference>
<dbReference type="GO" id="GO:0003785">
    <property type="term" value="F:actin monomer binding"/>
    <property type="evidence" value="ECO:0000318"/>
    <property type="project" value="GO_Central"/>
</dbReference>
<dbReference type="GO" id="GO:0007015">
    <property type="term" value="P:actin filament organization"/>
    <property type="evidence" value="ECO:0007669"/>
    <property type="project" value="InterPro"/>
</dbReference>
<dbReference type="GO" id="GO:0030335">
    <property type="term" value="P:positive regulation of cell migration"/>
    <property type="evidence" value="ECO:0000315"/>
    <property type="project" value="UniProtKB"/>
</dbReference>
<dbReference type="GO" id="GO:0030334">
    <property type="term" value="P:regulation of cell migration"/>
    <property type="evidence" value="ECO:0000318"/>
    <property type="project" value="GO_Central"/>
</dbReference>
<dbReference type="FunFam" id="1.20.5.520:FF:000001">
    <property type="entry name" value="Thymosin beta"/>
    <property type="match status" value="1"/>
</dbReference>
<dbReference type="Gene3D" id="1.20.5.520">
    <property type="entry name" value="Single helix bin"/>
    <property type="match status" value="1"/>
</dbReference>
<dbReference type="InterPro" id="IPR001152">
    <property type="entry name" value="Beta-thymosin"/>
</dbReference>
<dbReference type="InterPro" id="IPR038386">
    <property type="entry name" value="Beta-thymosin_sf"/>
</dbReference>
<dbReference type="PANTHER" id="PTHR12021">
    <property type="entry name" value="THYMOSIN BETA"/>
    <property type="match status" value="1"/>
</dbReference>
<dbReference type="PANTHER" id="PTHR12021:SF11">
    <property type="entry name" value="THYMOSIN BETA-15A-RELATED"/>
    <property type="match status" value="1"/>
</dbReference>
<dbReference type="Pfam" id="PF01290">
    <property type="entry name" value="Thymosin"/>
    <property type="match status" value="1"/>
</dbReference>
<dbReference type="PIRSF" id="PIRSF001828">
    <property type="entry name" value="Thymosin_beta"/>
    <property type="match status" value="1"/>
</dbReference>
<dbReference type="SMART" id="SM00152">
    <property type="entry name" value="THY"/>
    <property type="match status" value="1"/>
</dbReference>
<dbReference type="PROSITE" id="PS00500">
    <property type="entry name" value="THYMOSIN_B4"/>
    <property type="match status" value="1"/>
</dbReference>
<name>TB15B_HUMAN</name>
<organism>
    <name type="scientific">Homo sapiens</name>
    <name type="common">Human</name>
    <dbReference type="NCBI Taxonomy" id="9606"/>
    <lineage>
        <taxon>Eukaryota</taxon>
        <taxon>Metazoa</taxon>
        <taxon>Chordata</taxon>
        <taxon>Craniata</taxon>
        <taxon>Vertebrata</taxon>
        <taxon>Euteleostomi</taxon>
        <taxon>Mammalia</taxon>
        <taxon>Eutheria</taxon>
        <taxon>Euarchontoglires</taxon>
        <taxon>Primates</taxon>
        <taxon>Haplorrhini</taxon>
        <taxon>Catarrhini</taxon>
        <taxon>Hominidae</taxon>
        <taxon>Homo</taxon>
    </lineage>
</organism>
<comment type="function">
    <text evidence="1 4">Plays an important role in the organization of the cytoskeleton. Binds to and sequesters actin monomers (G actin) and therefore inhibits actin polymerization (By similarity). May be involved in cell migration (PubMed:19296525).</text>
</comment>
<comment type="subcellular location">
    <subcellularLocation>
        <location evidence="1">Cytoplasm</location>
        <location evidence="1">Cytoskeleton</location>
    </subcellularLocation>
</comment>
<comment type="tissue specificity">
    <text evidence="4">Expressed in colon and colon cancer tissue.</text>
</comment>
<comment type="similarity">
    <text evidence="5">Belongs to the thymosin beta family.</text>
</comment>
<feature type="initiator methionine" description="Removed" evidence="3">
    <location>
        <position position="1"/>
    </location>
</feature>
<feature type="chain" id="PRO_0000395401" description="Thymosin beta-15B">
    <location>
        <begin position="2"/>
        <end position="45"/>
    </location>
</feature>
<feature type="region of interest" description="Disordered" evidence="2">
    <location>
        <begin position="1"/>
        <end position="45"/>
    </location>
</feature>
<feature type="compositionally biased region" description="Basic and acidic residues" evidence="2">
    <location>
        <begin position="1"/>
        <end position="27"/>
    </location>
</feature>
<feature type="compositionally biased region" description="Basic and acidic residues" evidence="2">
    <location>
        <begin position="35"/>
        <end position="45"/>
    </location>
</feature>
<keyword id="KW-0009">Actin-binding</keyword>
<keyword id="KW-0963">Cytoplasm</keyword>
<keyword id="KW-0206">Cytoskeleton</keyword>
<keyword id="KW-0903">Direct protein sequencing</keyword>
<keyword id="KW-1185">Reference proteome</keyword>
<reference key="1">
    <citation type="journal article" date="2004" name="Nat. Genet.">
        <title>Complete sequencing and characterization of 21,243 full-length human cDNAs.</title>
        <authorList>
            <person name="Ota T."/>
            <person name="Suzuki Y."/>
            <person name="Nishikawa T."/>
            <person name="Otsuki T."/>
            <person name="Sugiyama T."/>
            <person name="Irie R."/>
            <person name="Wakamatsu A."/>
            <person name="Hayashi K."/>
            <person name="Sato H."/>
            <person name="Nagai K."/>
            <person name="Kimura K."/>
            <person name="Makita H."/>
            <person name="Sekine M."/>
            <person name="Obayashi M."/>
            <person name="Nishi T."/>
            <person name="Shibahara T."/>
            <person name="Tanaka T."/>
            <person name="Ishii S."/>
            <person name="Yamamoto J."/>
            <person name="Saito K."/>
            <person name="Kawai Y."/>
            <person name="Isono Y."/>
            <person name="Nakamura Y."/>
            <person name="Nagahari K."/>
            <person name="Murakami K."/>
            <person name="Yasuda T."/>
            <person name="Iwayanagi T."/>
            <person name="Wagatsuma M."/>
            <person name="Shiratori A."/>
            <person name="Sudo H."/>
            <person name="Hosoiri T."/>
            <person name="Kaku Y."/>
            <person name="Kodaira H."/>
            <person name="Kondo H."/>
            <person name="Sugawara M."/>
            <person name="Takahashi M."/>
            <person name="Kanda K."/>
            <person name="Yokoi T."/>
            <person name="Furuya T."/>
            <person name="Kikkawa E."/>
            <person name="Omura Y."/>
            <person name="Abe K."/>
            <person name="Kamihara K."/>
            <person name="Katsuta N."/>
            <person name="Sato K."/>
            <person name="Tanikawa M."/>
            <person name="Yamazaki M."/>
            <person name="Ninomiya K."/>
            <person name="Ishibashi T."/>
            <person name="Yamashita H."/>
            <person name="Murakawa K."/>
            <person name="Fujimori K."/>
            <person name="Tanai H."/>
            <person name="Kimata M."/>
            <person name="Watanabe M."/>
            <person name="Hiraoka S."/>
            <person name="Chiba Y."/>
            <person name="Ishida S."/>
            <person name="Ono Y."/>
            <person name="Takiguchi S."/>
            <person name="Watanabe S."/>
            <person name="Yosida M."/>
            <person name="Hotuta T."/>
            <person name="Kusano J."/>
            <person name="Kanehori K."/>
            <person name="Takahashi-Fujii A."/>
            <person name="Hara H."/>
            <person name="Tanase T.-O."/>
            <person name="Nomura Y."/>
            <person name="Togiya S."/>
            <person name="Komai F."/>
            <person name="Hara R."/>
            <person name="Takeuchi K."/>
            <person name="Arita M."/>
            <person name="Imose N."/>
            <person name="Musashino K."/>
            <person name="Yuuki H."/>
            <person name="Oshima A."/>
            <person name="Sasaki N."/>
            <person name="Aotsuka S."/>
            <person name="Yoshikawa Y."/>
            <person name="Matsunawa H."/>
            <person name="Ichihara T."/>
            <person name="Shiohata N."/>
            <person name="Sano S."/>
            <person name="Moriya S."/>
            <person name="Momiyama H."/>
            <person name="Satoh N."/>
            <person name="Takami S."/>
            <person name="Terashima Y."/>
            <person name="Suzuki O."/>
            <person name="Nakagawa S."/>
            <person name="Senoh A."/>
            <person name="Mizoguchi H."/>
            <person name="Goto Y."/>
            <person name="Shimizu F."/>
            <person name="Wakebe H."/>
            <person name="Hishigaki H."/>
            <person name="Watanabe T."/>
            <person name="Sugiyama A."/>
            <person name="Takemoto M."/>
            <person name="Kawakami B."/>
            <person name="Yamazaki M."/>
            <person name="Watanabe K."/>
            <person name="Kumagai A."/>
            <person name="Itakura S."/>
            <person name="Fukuzumi Y."/>
            <person name="Fujimori Y."/>
            <person name="Komiyama M."/>
            <person name="Tashiro H."/>
            <person name="Tanigami A."/>
            <person name="Fujiwara T."/>
            <person name="Ono T."/>
            <person name="Yamada K."/>
            <person name="Fujii Y."/>
            <person name="Ozaki K."/>
            <person name="Hirao M."/>
            <person name="Ohmori Y."/>
            <person name="Kawabata A."/>
            <person name="Hikiji T."/>
            <person name="Kobatake N."/>
            <person name="Inagaki H."/>
            <person name="Ikema Y."/>
            <person name="Okamoto S."/>
            <person name="Okitani R."/>
            <person name="Kawakami T."/>
            <person name="Noguchi S."/>
            <person name="Itoh T."/>
            <person name="Shigeta K."/>
            <person name="Senba T."/>
            <person name="Matsumura K."/>
            <person name="Nakajima Y."/>
            <person name="Mizuno T."/>
            <person name="Morinaga M."/>
            <person name="Sasaki M."/>
            <person name="Togashi T."/>
            <person name="Oyama M."/>
            <person name="Hata H."/>
            <person name="Watanabe M."/>
            <person name="Komatsu T."/>
            <person name="Mizushima-Sugano J."/>
            <person name="Satoh T."/>
            <person name="Shirai Y."/>
            <person name="Takahashi Y."/>
            <person name="Nakagawa K."/>
            <person name="Okumura K."/>
            <person name="Nagase T."/>
            <person name="Nomura N."/>
            <person name="Kikuchi H."/>
            <person name="Masuho Y."/>
            <person name="Yamashita R."/>
            <person name="Nakai K."/>
            <person name="Yada T."/>
            <person name="Nakamura Y."/>
            <person name="Ohara O."/>
            <person name="Isogai T."/>
            <person name="Sugano S."/>
        </authorList>
    </citation>
    <scope>NUCLEOTIDE SEQUENCE [LARGE SCALE MRNA]</scope>
    <source>
        <tissue>Brain</tissue>
    </source>
</reference>
<reference key="2">
    <citation type="journal article" date="2005" name="Nature">
        <title>The DNA sequence of the human X chromosome.</title>
        <authorList>
            <person name="Ross M.T."/>
            <person name="Grafham D.V."/>
            <person name="Coffey A.J."/>
            <person name="Scherer S."/>
            <person name="McLay K."/>
            <person name="Muzny D."/>
            <person name="Platzer M."/>
            <person name="Howell G.R."/>
            <person name="Burrows C."/>
            <person name="Bird C.P."/>
            <person name="Frankish A."/>
            <person name="Lovell F.L."/>
            <person name="Howe K.L."/>
            <person name="Ashurst J.L."/>
            <person name="Fulton R.S."/>
            <person name="Sudbrak R."/>
            <person name="Wen G."/>
            <person name="Jones M.C."/>
            <person name="Hurles M.E."/>
            <person name="Andrews T.D."/>
            <person name="Scott C.E."/>
            <person name="Searle S."/>
            <person name="Ramser J."/>
            <person name="Whittaker A."/>
            <person name="Deadman R."/>
            <person name="Carter N.P."/>
            <person name="Hunt S.E."/>
            <person name="Chen R."/>
            <person name="Cree A."/>
            <person name="Gunaratne P."/>
            <person name="Havlak P."/>
            <person name="Hodgson A."/>
            <person name="Metzker M.L."/>
            <person name="Richards S."/>
            <person name="Scott G."/>
            <person name="Steffen D."/>
            <person name="Sodergren E."/>
            <person name="Wheeler D.A."/>
            <person name="Worley K.C."/>
            <person name="Ainscough R."/>
            <person name="Ambrose K.D."/>
            <person name="Ansari-Lari M.A."/>
            <person name="Aradhya S."/>
            <person name="Ashwell R.I."/>
            <person name="Babbage A.K."/>
            <person name="Bagguley C.L."/>
            <person name="Ballabio A."/>
            <person name="Banerjee R."/>
            <person name="Barker G.E."/>
            <person name="Barlow K.F."/>
            <person name="Barrett I.P."/>
            <person name="Bates K.N."/>
            <person name="Beare D.M."/>
            <person name="Beasley H."/>
            <person name="Beasley O."/>
            <person name="Beck A."/>
            <person name="Bethel G."/>
            <person name="Blechschmidt K."/>
            <person name="Brady N."/>
            <person name="Bray-Allen S."/>
            <person name="Bridgeman A.M."/>
            <person name="Brown A.J."/>
            <person name="Brown M.J."/>
            <person name="Bonnin D."/>
            <person name="Bruford E.A."/>
            <person name="Buhay C."/>
            <person name="Burch P."/>
            <person name="Burford D."/>
            <person name="Burgess J."/>
            <person name="Burrill W."/>
            <person name="Burton J."/>
            <person name="Bye J.M."/>
            <person name="Carder C."/>
            <person name="Carrel L."/>
            <person name="Chako J."/>
            <person name="Chapman J.C."/>
            <person name="Chavez D."/>
            <person name="Chen E."/>
            <person name="Chen G."/>
            <person name="Chen Y."/>
            <person name="Chen Z."/>
            <person name="Chinault C."/>
            <person name="Ciccodicola A."/>
            <person name="Clark S.Y."/>
            <person name="Clarke G."/>
            <person name="Clee C.M."/>
            <person name="Clegg S."/>
            <person name="Clerc-Blankenburg K."/>
            <person name="Clifford K."/>
            <person name="Cobley V."/>
            <person name="Cole C.G."/>
            <person name="Conquer J.S."/>
            <person name="Corby N."/>
            <person name="Connor R.E."/>
            <person name="David R."/>
            <person name="Davies J."/>
            <person name="Davis C."/>
            <person name="Davis J."/>
            <person name="Delgado O."/>
            <person name="Deshazo D."/>
            <person name="Dhami P."/>
            <person name="Ding Y."/>
            <person name="Dinh H."/>
            <person name="Dodsworth S."/>
            <person name="Draper H."/>
            <person name="Dugan-Rocha S."/>
            <person name="Dunham A."/>
            <person name="Dunn M."/>
            <person name="Durbin K.J."/>
            <person name="Dutta I."/>
            <person name="Eades T."/>
            <person name="Ellwood M."/>
            <person name="Emery-Cohen A."/>
            <person name="Errington H."/>
            <person name="Evans K.L."/>
            <person name="Faulkner L."/>
            <person name="Francis F."/>
            <person name="Frankland J."/>
            <person name="Fraser A.E."/>
            <person name="Galgoczy P."/>
            <person name="Gilbert J."/>
            <person name="Gill R."/>
            <person name="Gloeckner G."/>
            <person name="Gregory S.G."/>
            <person name="Gribble S."/>
            <person name="Griffiths C."/>
            <person name="Grocock R."/>
            <person name="Gu Y."/>
            <person name="Gwilliam R."/>
            <person name="Hamilton C."/>
            <person name="Hart E.A."/>
            <person name="Hawes A."/>
            <person name="Heath P.D."/>
            <person name="Heitmann K."/>
            <person name="Hennig S."/>
            <person name="Hernandez J."/>
            <person name="Hinzmann B."/>
            <person name="Ho S."/>
            <person name="Hoffs M."/>
            <person name="Howden P.J."/>
            <person name="Huckle E.J."/>
            <person name="Hume J."/>
            <person name="Hunt P.J."/>
            <person name="Hunt A.R."/>
            <person name="Isherwood J."/>
            <person name="Jacob L."/>
            <person name="Johnson D."/>
            <person name="Jones S."/>
            <person name="de Jong P.J."/>
            <person name="Joseph S.S."/>
            <person name="Keenan S."/>
            <person name="Kelly S."/>
            <person name="Kershaw J.K."/>
            <person name="Khan Z."/>
            <person name="Kioschis P."/>
            <person name="Klages S."/>
            <person name="Knights A.J."/>
            <person name="Kosiura A."/>
            <person name="Kovar-Smith C."/>
            <person name="Laird G.K."/>
            <person name="Langford C."/>
            <person name="Lawlor S."/>
            <person name="Leversha M."/>
            <person name="Lewis L."/>
            <person name="Liu W."/>
            <person name="Lloyd C."/>
            <person name="Lloyd D.M."/>
            <person name="Loulseged H."/>
            <person name="Loveland J.E."/>
            <person name="Lovell J.D."/>
            <person name="Lozado R."/>
            <person name="Lu J."/>
            <person name="Lyne R."/>
            <person name="Ma J."/>
            <person name="Maheshwari M."/>
            <person name="Matthews L.H."/>
            <person name="McDowall J."/>
            <person name="McLaren S."/>
            <person name="McMurray A."/>
            <person name="Meidl P."/>
            <person name="Meitinger T."/>
            <person name="Milne S."/>
            <person name="Miner G."/>
            <person name="Mistry S.L."/>
            <person name="Morgan M."/>
            <person name="Morris S."/>
            <person name="Mueller I."/>
            <person name="Mullikin J.C."/>
            <person name="Nguyen N."/>
            <person name="Nordsiek G."/>
            <person name="Nyakatura G."/>
            <person name="O'dell C.N."/>
            <person name="Okwuonu G."/>
            <person name="Palmer S."/>
            <person name="Pandian R."/>
            <person name="Parker D."/>
            <person name="Parrish J."/>
            <person name="Pasternak S."/>
            <person name="Patel D."/>
            <person name="Pearce A.V."/>
            <person name="Pearson D.M."/>
            <person name="Pelan S.E."/>
            <person name="Perez L."/>
            <person name="Porter K.M."/>
            <person name="Ramsey Y."/>
            <person name="Reichwald K."/>
            <person name="Rhodes S."/>
            <person name="Ridler K.A."/>
            <person name="Schlessinger D."/>
            <person name="Schueler M.G."/>
            <person name="Sehra H.K."/>
            <person name="Shaw-Smith C."/>
            <person name="Shen H."/>
            <person name="Sheridan E.M."/>
            <person name="Shownkeen R."/>
            <person name="Skuce C.D."/>
            <person name="Smith M.L."/>
            <person name="Sotheran E.C."/>
            <person name="Steingruber H.E."/>
            <person name="Steward C.A."/>
            <person name="Storey R."/>
            <person name="Swann R.M."/>
            <person name="Swarbreck D."/>
            <person name="Tabor P.E."/>
            <person name="Taudien S."/>
            <person name="Taylor T."/>
            <person name="Teague B."/>
            <person name="Thomas K."/>
            <person name="Thorpe A."/>
            <person name="Timms K."/>
            <person name="Tracey A."/>
            <person name="Trevanion S."/>
            <person name="Tromans A.C."/>
            <person name="d'Urso M."/>
            <person name="Verduzco D."/>
            <person name="Villasana D."/>
            <person name="Waldron L."/>
            <person name="Wall M."/>
            <person name="Wang Q."/>
            <person name="Warren J."/>
            <person name="Warry G.L."/>
            <person name="Wei X."/>
            <person name="West A."/>
            <person name="Whitehead S.L."/>
            <person name="Whiteley M.N."/>
            <person name="Wilkinson J.E."/>
            <person name="Willey D.L."/>
            <person name="Williams G."/>
            <person name="Williams L."/>
            <person name="Williamson A."/>
            <person name="Williamson H."/>
            <person name="Wilming L."/>
            <person name="Woodmansey R.L."/>
            <person name="Wray P.W."/>
            <person name="Yen J."/>
            <person name="Zhang J."/>
            <person name="Zhou J."/>
            <person name="Zoghbi H."/>
            <person name="Zorilla S."/>
            <person name="Buck D."/>
            <person name="Reinhardt R."/>
            <person name="Poustka A."/>
            <person name="Rosenthal A."/>
            <person name="Lehrach H."/>
            <person name="Meindl A."/>
            <person name="Minx P.J."/>
            <person name="Hillier L.W."/>
            <person name="Willard H.F."/>
            <person name="Wilson R.K."/>
            <person name="Waterston R.H."/>
            <person name="Rice C.M."/>
            <person name="Vaudin M."/>
            <person name="Coulson A."/>
            <person name="Nelson D.L."/>
            <person name="Weinstock G."/>
            <person name="Sulston J.E."/>
            <person name="Durbin R.M."/>
            <person name="Hubbard T."/>
            <person name="Gibbs R.A."/>
            <person name="Beck S."/>
            <person name="Rogers J."/>
            <person name="Bentley D.R."/>
        </authorList>
    </citation>
    <scope>NUCLEOTIDE SEQUENCE [LARGE SCALE GENOMIC DNA]</scope>
</reference>
<reference key="3">
    <citation type="journal article" date="2003" name="Nat. Biotechnol.">
        <title>Exploring proteomes and analyzing protein processing by mass spectrometric identification of sorted N-terminal peptides.</title>
        <authorList>
            <person name="Gevaert K."/>
            <person name="Goethals M."/>
            <person name="Martens L."/>
            <person name="Van Damme J."/>
            <person name="Staes A."/>
            <person name="Thomas G.R."/>
            <person name="Vandekerckhove J."/>
        </authorList>
    </citation>
    <scope>PROTEIN SEQUENCE OF 2-15</scope>
    <source>
        <tissue>Platelet</tissue>
    </source>
</reference>
<reference key="4">
    <citation type="journal article" date="2009" name="Genes Chromosomes Cancer">
        <title>Differential regulation of human thymosin beta 15 isoforms by transforming growth factor beta 1.</title>
        <authorList>
            <person name="Banyard J."/>
            <person name="Barrows C."/>
            <person name="Zetter B.R."/>
        </authorList>
    </citation>
    <scope>FUNCTION</scope>
    <scope>TISSUE SPECIFICITY</scope>
</reference>
<accession>P0CG35</accession>
<accession>A8K614</accession>
<accession>Q99406</accession>
<evidence type="ECO:0000250" key="1">
    <source>
        <dbReference type="UniProtKB" id="P62328"/>
    </source>
</evidence>
<evidence type="ECO:0000256" key="2">
    <source>
        <dbReference type="SAM" id="MobiDB-lite"/>
    </source>
</evidence>
<evidence type="ECO:0000269" key="3">
    <source>
    </source>
</evidence>
<evidence type="ECO:0000269" key="4">
    <source>
    </source>
</evidence>
<evidence type="ECO:0000305" key="5"/>
<sequence>MSDKPDLSEVEKFDRSKLKKTNTEEKNTLPSKETIQQEKECVQTS</sequence>
<gene>
    <name type="primary">TMSB15B</name>
</gene>
<protein>
    <recommendedName>
        <fullName>Thymosin beta-15B</fullName>
    </recommendedName>
</protein>